<gene>
    <name evidence="1" type="primary">nadK</name>
    <name type="ordered locus">Sbal_1355</name>
</gene>
<feature type="chain" id="PRO_1000079509" description="NAD kinase">
    <location>
        <begin position="1"/>
        <end position="309"/>
    </location>
</feature>
<feature type="active site" description="Proton acceptor" evidence="1">
    <location>
        <position position="89"/>
    </location>
</feature>
<feature type="binding site" evidence="1">
    <location>
        <begin position="89"/>
        <end position="90"/>
    </location>
    <ligand>
        <name>NAD(+)</name>
        <dbReference type="ChEBI" id="CHEBI:57540"/>
    </ligand>
</feature>
<feature type="binding site" evidence="1">
    <location>
        <begin position="163"/>
        <end position="164"/>
    </location>
    <ligand>
        <name>NAD(+)</name>
        <dbReference type="ChEBI" id="CHEBI:57540"/>
    </ligand>
</feature>
<feature type="binding site" evidence="1">
    <location>
        <position position="174"/>
    </location>
    <ligand>
        <name>NAD(+)</name>
        <dbReference type="ChEBI" id="CHEBI:57540"/>
    </ligand>
</feature>
<feature type="binding site" evidence="1">
    <location>
        <position position="191"/>
    </location>
    <ligand>
        <name>NAD(+)</name>
        <dbReference type="ChEBI" id="CHEBI:57540"/>
    </ligand>
</feature>
<feature type="binding site" evidence="1">
    <location>
        <position position="193"/>
    </location>
    <ligand>
        <name>NAD(+)</name>
        <dbReference type="ChEBI" id="CHEBI:57540"/>
    </ligand>
</feature>
<feature type="binding site" evidence="1">
    <location>
        <begin position="204"/>
        <end position="209"/>
    </location>
    <ligand>
        <name>NAD(+)</name>
        <dbReference type="ChEBI" id="CHEBI:57540"/>
    </ligand>
</feature>
<protein>
    <recommendedName>
        <fullName evidence="1">NAD kinase</fullName>
        <ecNumber evidence="1">2.7.1.23</ecNumber>
    </recommendedName>
    <alternativeName>
        <fullName evidence="1">ATP-dependent NAD kinase</fullName>
    </alternativeName>
</protein>
<evidence type="ECO:0000255" key="1">
    <source>
        <dbReference type="HAMAP-Rule" id="MF_00361"/>
    </source>
</evidence>
<keyword id="KW-0067">ATP-binding</keyword>
<keyword id="KW-0963">Cytoplasm</keyword>
<keyword id="KW-0418">Kinase</keyword>
<keyword id="KW-0520">NAD</keyword>
<keyword id="KW-0521">NADP</keyword>
<keyword id="KW-0547">Nucleotide-binding</keyword>
<keyword id="KW-1185">Reference proteome</keyword>
<keyword id="KW-0808">Transferase</keyword>
<comment type="function">
    <text evidence="1">Involved in the regulation of the intracellular balance of NAD and NADP, and is a key enzyme in the biosynthesis of NADP. Catalyzes specifically the phosphorylation on 2'-hydroxyl of the adenosine moiety of NAD to yield NADP.</text>
</comment>
<comment type="catalytic activity">
    <reaction evidence="1">
        <text>NAD(+) + ATP = ADP + NADP(+) + H(+)</text>
        <dbReference type="Rhea" id="RHEA:18629"/>
        <dbReference type="ChEBI" id="CHEBI:15378"/>
        <dbReference type="ChEBI" id="CHEBI:30616"/>
        <dbReference type="ChEBI" id="CHEBI:57540"/>
        <dbReference type="ChEBI" id="CHEBI:58349"/>
        <dbReference type="ChEBI" id="CHEBI:456216"/>
        <dbReference type="EC" id="2.7.1.23"/>
    </reaction>
</comment>
<comment type="cofactor">
    <cofactor evidence="1">
        <name>a divalent metal cation</name>
        <dbReference type="ChEBI" id="CHEBI:60240"/>
    </cofactor>
</comment>
<comment type="subcellular location">
    <subcellularLocation>
        <location evidence="1">Cytoplasm</location>
    </subcellularLocation>
</comment>
<comment type="similarity">
    <text evidence="1">Belongs to the NAD kinase family.</text>
</comment>
<sequence length="309" mass="33859">MGINFDVSRPKARSSINMTTKFHTIGLIGKPHHQGTNQTLKRLHHWLTMQGFEVLVEERVAAELGPNIEAVDLLEIGARCDLAIVVGGDGNMLGAARVLARFDLGVIGVNRGNLGFLTDLPPDAFEEALAKVLDGEFDTEHRFLLEAEVYRHGMLKASNTAVNEAVLHPGKIAHMIEFEVYIDDQFMYSQRADGMIVSTPTGSTAYALSAGGAILTPNLQALILVPMFPHTLSCRPIVVDACSTIKMVVSPDNGENLEVSCDGHVHLAVLPGDEIIVRRSSERLRLIHPKGHNYFHVLRTKLGWGSKLF</sequence>
<reference key="1">
    <citation type="submission" date="2007-02" db="EMBL/GenBank/DDBJ databases">
        <title>Complete sequence of chromosome of Shewanella baltica OS155.</title>
        <authorList>
            <consortium name="US DOE Joint Genome Institute"/>
            <person name="Copeland A."/>
            <person name="Lucas S."/>
            <person name="Lapidus A."/>
            <person name="Barry K."/>
            <person name="Detter J.C."/>
            <person name="Glavina del Rio T."/>
            <person name="Hammon N."/>
            <person name="Israni S."/>
            <person name="Dalin E."/>
            <person name="Tice H."/>
            <person name="Pitluck S."/>
            <person name="Sims D.R."/>
            <person name="Brettin T."/>
            <person name="Bruce D."/>
            <person name="Han C."/>
            <person name="Tapia R."/>
            <person name="Brainard J."/>
            <person name="Schmutz J."/>
            <person name="Larimer F."/>
            <person name="Land M."/>
            <person name="Hauser L."/>
            <person name="Kyrpides N."/>
            <person name="Mikhailova N."/>
            <person name="Brettar I."/>
            <person name="Klappenbach J."/>
            <person name="Konstantinidis K."/>
            <person name="Rodrigues J."/>
            <person name="Tiedje J."/>
            <person name="Richardson P."/>
        </authorList>
    </citation>
    <scope>NUCLEOTIDE SEQUENCE [LARGE SCALE GENOMIC DNA]</scope>
    <source>
        <strain>OS155 / ATCC BAA-1091</strain>
    </source>
</reference>
<dbReference type="EC" id="2.7.1.23" evidence="1"/>
<dbReference type="EMBL" id="CP000563">
    <property type="protein sequence ID" value="ABN60873.1"/>
    <property type="molecule type" value="Genomic_DNA"/>
</dbReference>
<dbReference type="SMR" id="A3D2B0"/>
<dbReference type="STRING" id="325240.Sbal_1355"/>
<dbReference type="KEGG" id="sbl:Sbal_1355"/>
<dbReference type="HOGENOM" id="CLU_008831_0_1_6"/>
<dbReference type="Proteomes" id="UP000001557">
    <property type="component" value="Chromosome"/>
</dbReference>
<dbReference type="GO" id="GO:0005737">
    <property type="term" value="C:cytoplasm"/>
    <property type="evidence" value="ECO:0007669"/>
    <property type="project" value="UniProtKB-SubCell"/>
</dbReference>
<dbReference type="GO" id="GO:0005524">
    <property type="term" value="F:ATP binding"/>
    <property type="evidence" value="ECO:0007669"/>
    <property type="project" value="UniProtKB-KW"/>
</dbReference>
<dbReference type="GO" id="GO:0046872">
    <property type="term" value="F:metal ion binding"/>
    <property type="evidence" value="ECO:0007669"/>
    <property type="project" value="UniProtKB-UniRule"/>
</dbReference>
<dbReference type="GO" id="GO:0051287">
    <property type="term" value="F:NAD binding"/>
    <property type="evidence" value="ECO:0007669"/>
    <property type="project" value="UniProtKB-ARBA"/>
</dbReference>
<dbReference type="GO" id="GO:0003951">
    <property type="term" value="F:NAD+ kinase activity"/>
    <property type="evidence" value="ECO:0007669"/>
    <property type="project" value="UniProtKB-UniRule"/>
</dbReference>
<dbReference type="GO" id="GO:0019674">
    <property type="term" value="P:NAD metabolic process"/>
    <property type="evidence" value="ECO:0007669"/>
    <property type="project" value="InterPro"/>
</dbReference>
<dbReference type="GO" id="GO:0006741">
    <property type="term" value="P:NADP biosynthetic process"/>
    <property type="evidence" value="ECO:0007669"/>
    <property type="project" value="UniProtKB-UniRule"/>
</dbReference>
<dbReference type="FunFam" id="2.60.200.30:FF:000001">
    <property type="entry name" value="NAD kinase"/>
    <property type="match status" value="1"/>
</dbReference>
<dbReference type="Gene3D" id="3.40.50.10330">
    <property type="entry name" value="Probable inorganic polyphosphate/atp-NAD kinase, domain 1"/>
    <property type="match status" value="1"/>
</dbReference>
<dbReference type="Gene3D" id="2.60.200.30">
    <property type="entry name" value="Probable inorganic polyphosphate/atp-NAD kinase, domain 2"/>
    <property type="match status" value="1"/>
</dbReference>
<dbReference type="HAMAP" id="MF_00361">
    <property type="entry name" value="NAD_kinase"/>
    <property type="match status" value="1"/>
</dbReference>
<dbReference type="InterPro" id="IPR017438">
    <property type="entry name" value="ATP-NAD_kinase_N"/>
</dbReference>
<dbReference type="InterPro" id="IPR017437">
    <property type="entry name" value="ATP-NAD_kinase_PpnK-typ_C"/>
</dbReference>
<dbReference type="InterPro" id="IPR016064">
    <property type="entry name" value="NAD/diacylglycerol_kinase_sf"/>
</dbReference>
<dbReference type="InterPro" id="IPR002504">
    <property type="entry name" value="NADK"/>
</dbReference>
<dbReference type="NCBIfam" id="NF002306">
    <property type="entry name" value="PRK01231.1"/>
    <property type="match status" value="1"/>
</dbReference>
<dbReference type="NCBIfam" id="NF002893">
    <property type="entry name" value="PRK03378.1"/>
    <property type="match status" value="1"/>
</dbReference>
<dbReference type="PANTHER" id="PTHR20275">
    <property type="entry name" value="NAD KINASE"/>
    <property type="match status" value="1"/>
</dbReference>
<dbReference type="PANTHER" id="PTHR20275:SF0">
    <property type="entry name" value="NAD KINASE"/>
    <property type="match status" value="1"/>
</dbReference>
<dbReference type="Pfam" id="PF01513">
    <property type="entry name" value="NAD_kinase"/>
    <property type="match status" value="1"/>
</dbReference>
<dbReference type="Pfam" id="PF20143">
    <property type="entry name" value="NAD_kinase_C"/>
    <property type="match status" value="1"/>
</dbReference>
<dbReference type="SUPFAM" id="SSF111331">
    <property type="entry name" value="NAD kinase/diacylglycerol kinase-like"/>
    <property type="match status" value="1"/>
</dbReference>
<proteinExistence type="inferred from homology"/>
<accession>A3D2B0</accession>
<name>NADK_SHEB5</name>
<organism>
    <name type="scientific">Shewanella baltica (strain OS155 / ATCC BAA-1091)</name>
    <dbReference type="NCBI Taxonomy" id="325240"/>
    <lineage>
        <taxon>Bacteria</taxon>
        <taxon>Pseudomonadati</taxon>
        <taxon>Pseudomonadota</taxon>
        <taxon>Gammaproteobacteria</taxon>
        <taxon>Alteromonadales</taxon>
        <taxon>Shewanellaceae</taxon>
        <taxon>Shewanella</taxon>
    </lineage>
</organism>